<gene>
    <name evidence="1" type="primary">rimM</name>
    <name type="ordered locus">CYA_1525</name>
</gene>
<keyword id="KW-0143">Chaperone</keyword>
<keyword id="KW-0963">Cytoplasm</keyword>
<keyword id="KW-0690">Ribosome biogenesis</keyword>
<keyword id="KW-0698">rRNA processing</keyword>
<name>RIMM_SYNJA</name>
<evidence type="ECO:0000255" key="1">
    <source>
        <dbReference type="HAMAP-Rule" id="MF_00014"/>
    </source>
</evidence>
<sequence length="186" mass="20702">MVASRDTAWLLVGQVVAAHGLRGWLRVKCWSDFPERLTEPGPRWLQRDSDPEPLLHPLIEGQFFPAKGLYLVRLEGIPDRTAAEAWVGAKVLVPASQRLPLEPEEYHYSDLIGLAVYHQGRLLGHVSAIWAAGQDVLEIATPDKRQVLIPFVKALVPVVDLEKGELQVQPPPGLVESFLGQDRARN</sequence>
<proteinExistence type="inferred from homology"/>
<protein>
    <recommendedName>
        <fullName evidence="1">Ribosome maturation factor RimM</fullName>
    </recommendedName>
</protein>
<organism>
    <name type="scientific">Synechococcus sp. (strain JA-3-3Ab)</name>
    <name type="common">Cyanobacteria bacterium Yellowstone A-Prime</name>
    <dbReference type="NCBI Taxonomy" id="321327"/>
    <lineage>
        <taxon>Bacteria</taxon>
        <taxon>Bacillati</taxon>
        <taxon>Cyanobacteriota</taxon>
        <taxon>Cyanophyceae</taxon>
        <taxon>Synechococcales</taxon>
        <taxon>Synechococcaceae</taxon>
        <taxon>Synechococcus</taxon>
    </lineage>
</organism>
<comment type="function">
    <text evidence="1">An accessory protein needed during the final step in the assembly of 30S ribosomal subunit, possibly for assembly of the head region. Essential for efficient processing of 16S rRNA. May be needed both before and after RbfA during the maturation of 16S rRNA. It has affinity for free ribosomal 30S subunits but not for 70S ribosomes.</text>
</comment>
<comment type="subunit">
    <text evidence="1">Binds ribosomal protein uS19.</text>
</comment>
<comment type="subcellular location">
    <subcellularLocation>
        <location evidence="1">Cytoplasm</location>
    </subcellularLocation>
</comment>
<comment type="domain">
    <text evidence="1">The PRC barrel domain binds ribosomal protein uS19.</text>
</comment>
<comment type="similarity">
    <text evidence="1">Belongs to the RimM family.</text>
</comment>
<reference key="1">
    <citation type="journal article" date="2007" name="ISME J.">
        <title>Population level functional diversity in a microbial community revealed by comparative genomic and metagenomic analyses.</title>
        <authorList>
            <person name="Bhaya D."/>
            <person name="Grossman A.R."/>
            <person name="Steunou A.-S."/>
            <person name="Khuri N."/>
            <person name="Cohan F.M."/>
            <person name="Hamamura N."/>
            <person name="Melendrez M.C."/>
            <person name="Bateson M.M."/>
            <person name="Ward D.M."/>
            <person name="Heidelberg J.F."/>
        </authorList>
    </citation>
    <scope>NUCLEOTIDE SEQUENCE [LARGE SCALE GENOMIC DNA]</scope>
    <source>
        <strain>JA-3-3Ab</strain>
    </source>
</reference>
<dbReference type="EMBL" id="CP000239">
    <property type="protein sequence ID" value="ABC99690.1"/>
    <property type="molecule type" value="Genomic_DNA"/>
</dbReference>
<dbReference type="RefSeq" id="WP_011430368.1">
    <property type="nucleotide sequence ID" value="NC_007775.1"/>
</dbReference>
<dbReference type="SMR" id="Q2JUD0"/>
<dbReference type="STRING" id="321327.CYA_1525"/>
<dbReference type="KEGG" id="cya:CYA_1525"/>
<dbReference type="eggNOG" id="COG0806">
    <property type="taxonomic scope" value="Bacteria"/>
</dbReference>
<dbReference type="HOGENOM" id="CLU_077636_3_0_3"/>
<dbReference type="OrthoDB" id="9810331at2"/>
<dbReference type="Proteomes" id="UP000008818">
    <property type="component" value="Chromosome"/>
</dbReference>
<dbReference type="GO" id="GO:0005737">
    <property type="term" value="C:cytoplasm"/>
    <property type="evidence" value="ECO:0007669"/>
    <property type="project" value="UniProtKB-SubCell"/>
</dbReference>
<dbReference type="GO" id="GO:0005840">
    <property type="term" value="C:ribosome"/>
    <property type="evidence" value="ECO:0007669"/>
    <property type="project" value="InterPro"/>
</dbReference>
<dbReference type="GO" id="GO:0043022">
    <property type="term" value="F:ribosome binding"/>
    <property type="evidence" value="ECO:0007669"/>
    <property type="project" value="InterPro"/>
</dbReference>
<dbReference type="GO" id="GO:0042274">
    <property type="term" value="P:ribosomal small subunit biogenesis"/>
    <property type="evidence" value="ECO:0007669"/>
    <property type="project" value="UniProtKB-UniRule"/>
</dbReference>
<dbReference type="GO" id="GO:0006364">
    <property type="term" value="P:rRNA processing"/>
    <property type="evidence" value="ECO:0007669"/>
    <property type="project" value="UniProtKB-UniRule"/>
</dbReference>
<dbReference type="Gene3D" id="2.30.30.240">
    <property type="entry name" value="PRC-barrel domain"/>
    <property type="match status" value="1"/>
</dbReference>
<dbReference type="Gene3D" id="2.40.30.60">
    <property type="entry name" value="RimM"/>
    <property type="match status" value="1"/>
</dbReference>
<dbReference type="HAMAP" id="MF_00014">
    <property type="entry name" value="Ribosome_mat_RimM"/>
    <property type="match status" value="1"/>
</dbReference>
<dbReference type="InterPro" id="IPR011033">
    <property type="entry name" value="PRC_barrel-like_sf"/>
</dbReference>
<dbReference type="InterPro" id="IPR056792">
    <property type="entry name" value="PRC_RimM"/>
</dbReference>
<dbReference type="InterPro" id="IPR011961">
    <property type="entry name" value="RimM"/>
</dbReference>
<dbReference type="InterPro" id="IPR002676">
    <property type="entry name" value="RimM_N"/>
</dbReference>
<dbReference type="InterPro" id="IPR036976">
    <property type="entry name" value="RimM_N_sf"/>
</dbReference>
<dbReference type="InterPro" id="IPR009000">
    <property type="entry name" value="Transl_B-barrel_sf"/>
</dbReference>
<dbReference type="NCBIfam" id="TIGR02273">
    <property type="entry name" value="16S_RimM"/>
    <property type="match status" value="1"/>
</dbReference>
<dbReference type="PANTHER" id="PTHR33692">
    <property type="entry name" value="RIBOSOME MATURATION FACTOR RIMM"/>
    <property type="match status" value="1"/>
</dbReference>
<dbReference type="PANTHER" id="PTHR33692:SF1">
    <property type="entry name" value="RIBOSOME MATURATION FACTOR RIMM"/>
    <property type="match status" value="1"/>
</dbReference>
<dbReference type="Pfam" id="PF24986">
    <property type="entry name" value="PRC_RimM"/>
    <property type="match status" value="1"/>
</dbReference>
<dbReference type="Pfam" id="PF01782">
    <property type="entry name" value="RimM"/>
    <property type="match status" value="1"/>
</dbReference>
<dbReference type="SUPFAM" id="SSF50346">
    <property type="entry name" value="PRC-barrel domain"/>
    <property type="match status" value="1"/>
</dbReference>
<dbReference type="SUPFAM" id="SSF50447">
    <property type="entry name" value="Translation proteins"/>
    <property type="match status" value="1"/>
</dbReference>
<accession>Q2JUD0</accession>
<feature type="chain" id="PRO_0000244179" description="Ribosome maturation factor RimM">
    <location>
        <begin position="1"/>
        <end position="186"/>
    </location>
</feature>
<feature type="domain" description="PRC barrel" evidence="1">
    <location>
        <begin position="103"/>
        <end position="174"/>
    </location>
</feature>